<accession>A4WNY2</accession>
<organism>
    <name type="scientific">Cereibacter sphaeroides (strain ATCC 17025 / ATH 2.4.3)</name>
    <name type="common">Rhodobacter sphaeroides</name>
    <dbReference type="NCBI Taxonomy" id="349102"/>
    <lineage>
        <taxon>Bacteria</taxon>
        <taxon>Pseudomonadati</taxon>
        <taxon>Pseudomonadota</taxon>
        <taxon>Alphaproteobacteria</taxon>
        <taxon>Rhodobacterales</taxon>
        <taxon>Paracoccaceae</taxon>
        <taxon>Cereibacter</taxon>
    </lineage>
</organism>
<gene>
    <name evidence="1" type="primary">rpmE</name>
    <name type="ordered locus">Rsph17025_0186</name>
</gene>
<feature type="chain" id="PRO_1000126712" description="Large ribosomal subunit protein bL31">
    <location>
        <begin position="1"/>
        <end position="73"/>
    </location>
</feature>
<reference key="1">
    <citation type="submission" date="2007-04" db="EMBL/GenBank/DDBJ databases">
        <title>Complete sequence of chromosome of Rhodobacter sphaeroides ATCC 17025.</title>
        <authorList>
            <consortium name="US DOE Joint Genome Institute"/>
            <person name="Copeland A."/>
            <person name="Lucas S."/>
            <person name="Lapidus A."/>
            <person name="Barry K."/>
            <person name="Detter J.C."/>
            <person name="Glavina del Rio T."/>
            <person name="Hammon N."/>
            <person name="Israni S."/>
            <person name="Dalin E."/>
            <person name="Tice H."/>
            <person name="Pitluck S."/>
            <person name="Chertkov O."/>
            <person name="Brettin T."/>
            <person name="Bruce D."/>
            <person name="Han C."/>
            <person name="Schmutz J."/>
            <person name="Larimer F."/>
            <person name="Land M."/>
            <person name="Hauser L."/>
            <person name="Kyrpides N."/>
            <person name="Kim E."/>
            <person name="Richardson P."/>
            <person name="Mackenzie C."/>
            <person name="Choudhary M."/>
            <person name="Donohue T.J."/>
            <person name="Kaplan S."/>
        </authorList>
    </citation>
    <scope>NUCLEOTIDE SEQUENCE [LARGE SCALE GENOMIC DNA]</scope>
    <source>
        <strain>ATCC 17025 / ATH 2.4.3</strain>
    </source>
</reference>
<keyword id="KW-0687">Ribonucleoprotein</keyword>
<keyword id="KW-0689">Ribosomal protein</keyword>
<keyword id="KW-0694">RNA-binding</keyword>
<keyword id="KW-0699">rRNA-binding</keyword>
<sequence>MKKGIHPDYHMIDVKMTDGTVFQVRSTWGKEGEQMALEIDPLAHPAWTGGTAKLMDTGGRVSKFKNKYAGLGF</sequence>
<protein>
    <recommendedName>
        <fullName evidence="1">Large ribosomal subunit protein bL31</fullName>
    </recommendedName>
    <alternativeName>
        <fullName evidence="2">50S ribosomal protein L31</fullName>
    </alternativeName>
</protein>
<dbReference type="EMBL" id="CP000661">
    <property type="protein sequence ID" value="ABP69096.1"/>
    <property type="molecule type" value="Genomic_DNA"/>
</dbReference>
<dbReference type="SMR" id="A4WNY2"/>
<dbReference type="STRING" id="349102.Rsph17025_0186"/>
<dbReference type="KEGG" id="rsq:Rsph17025_0186"/>
<dbReference type="eggNOG" id="COG0254">
    <property type="taxonomic scope" value="Bacteria"/>
</dbReference>
<dbReference type="HOGENOM" id="CLU_114306_3_2_5"/>
<dbReference type="BioCyc" id="RSPH349102:G1G8M-191-MONOMER"/>
<dbReference type="GO" id="GO:1990904">
    <property type="term" value="C:ribonucleoprotein complex"/>
    <property type="evidence" value="ECO:0007669"/>
    <property type="project" value="UniProtKB-KW"/>
</dbReference>
<dbReference type="GO" id="GO:0005840">
    <property type="term" value="C:ribosome"/>
    <property type="evidence" value="ECO:0007669"/>
    <property type="project" value="UniProtKB-KW"/>
</dbReference>
<dbReference type="GO" id="GO:0019843">
    <property type="term" value="F:rRNA binding"/>
    <property type="evidence" value="ECO:0007669"/>
    <property type="project" value="UniProtKB-KW"/>
</dbReference>
<dbReference type="GO" id="GO:0003735">
    <property type="term" value="F:structural constituent of ribosome"/>
    <property type="evidence" value="ECO:0007669"/>
    <property type="project" value="InterPro"/>
</dbReference>
<dbReference type="GO" id="GO:0006412">
    <property type="term" value="P:translation"/>
    <property type="evidence" value="ECO:0007669"/>
    <property type="project" value="UniProtKB-UniRule"/>
</dbReference>
<dbReference type="Gene3D" id="4.10.830.30">
    <property type="entry name" value="Ribosomal protein L31"/>
    <property type="match status" value="1"/>
</dbReference>
<dbReference type="HAMAP" id="MF_00501">
    <property type="entry name" value="Ribosomal_bL31_1"/>
    <property type="match status" value="1"/>
</dbReference>
<dbReference type="InterPro" id="IPR034704">
    <property type="entry name" value="Ribosomal_bL28/bL31-like_sf"/>
</dbReference>
<dbReference type="InterPro" id="IPR002150">
    <property type="entry name" value="Ribosomal_bL31"/>
</dbReference>
<dbReference type="InterPro" id="IPR027491">
    <property type="entry name" value="Ribosomal_bL31_A"/>
</dbReference>
<dbReference type="InterPro" id="IPR042105">
    <property type="entry name" value="Ribosomal_bL31_sf"/>
</dbReference>
<dbReference type="NCBIfam" id="TIGR00105">
    <property type="entry name" value="L31"/>
    <property type="match status" value="1"/>
</dbReference>
<dbReference type="NCBIfam" id="NF001809">
    <property type="entry name" value="PRK00528.1"/>
    <property type="match status" value="1"/>
</dbReference>
<dbReference type="PANTHER" id="PTHR33280">
    <property type="entry name" value="50S RIBOSOMAL PROTEIN L31, CHLOROPLASTIC"/>
    <property type="match status" value="1"/>
</dbReference>
<dbReference type="PANTHER" id="PTHR33280:SF6">
    <property type="entry name" value="LARGE RIBOSOMAL SUBUNIT PROTEIN BL31A"/>
    <property type="match status" value="1"/>
</dbReference>
<dbReference type="Pfam" id="PF01197">
    <property type="entry name" value="Ribosomal_L31"/>
    <property type="match status" value="1"/>
</dbReference>
<dbReference type="PRINTS" id="PR01249">
    <property type="entry name" value="RIBOSOMALL31"/>
</dbReference>
<dbReference type="SUPFAM" id="SSF143800">
    <property type="entry name" value="L28p-like"/>
    <property type="match status" value="1"/>
</dbReference>
<dbReference type="PROSITE" id="PS01143">
    <property type="entry name" value="RIBOSOMAL_L31"/>
    <property type="match status" value="1"/>
</dbReference>
<proteinExistence type="inferred from homology"/>
<evidence type="ECO:0000255" key="1">
    <source>
        <dbReference type="HAMAP-Rule" id="MF_00501"/>
    </source>
</evidence>
<evidence type="ECO:0000305" key="2"/>
<name>RL31_CERS5</name>
<comment type="function">
    <text evidence="1">Binds the 23S rRNA.</text>
</comment>
<comment type="subunit">
    <text evidence="1">Part of the 50S ribosomal subunit.</text>
</comment>
<comment type="similarity">
    <text evidence="1">Belongs to the bacterial ribosomal protein bL31 family. Type A subfamily.</text>
</comment>